<feature type="transit peptide" description="Mitochondrion" evidence="2">
    <location>
        <begin position="1"/>
        <end position="41"/>
    </location>
</feature>
<feature type="chain" id="PRO_0000407951" description="Required for respiratory growth protein 9, mitochondrial">
    <location>
        <begin position="42"/>
        <end position="298"/>
    </location>
</feature>
<feature type="region of interest" description="Disordered" evidence="3">
    <location>
        <begin position="35"/>
        <end position="92"/>
    </location>
</feature>
<feature type="region of interest" description="Disordered" evidence="3">
    <location>
        <begin position="186"/>
        <end position="298"/>
    </location>
</feature>
<feature type="compositionally biased region" description="Polar residues" evidence="3">
    <location>
        <begin position="35"/>
        <end position="63"/>
    </location>
</feature>
<feature type="compositionally biased region" description="Polar residues" evidence="3">
    <location>
        <begin position="205"/>
        <end position="214"/>
    </location>
</feature>
<feature type="compositionally biased region" description="Basic and acidic residues" evidence="3">
    <location>
        <begin position="225"/>
        <end position="243"/>
    </location>
</feature>
<feature type="compositionally biased region" description="Basic and acidic residues" evidence="3">
    <location>
        <begin position="251"/>
        <end position="264"/>
    </location>
</feature>
<evidence type="ECO:0000250" key="1"/>
<evidence type="ECO:0000255" key="2"/>
<evidence type="ECO:0000256" key="3">
    <source>
        <dbReference type="SAM" id="MobiDB-lite"/>
    </source>
</evidence>
<evidence type="ECO:0000305" key="4"/>
<reference key="1">
    <citation type="journal article" date="2012" name="MBio">
        <title>Comparative genome analysis of Trichophyton rubrum and related dermatophytes reveals candidate genes involved in infection.</title>
        <authorList>
            <person name="Martinez D.A."/>
            <person name="Oliver B.G."/>
            <person name="Graeser Y."/>
            <person name="Goldberg J.M."/>
            <person name="Li W."/>
            <person name="Martinez-Rossi N.M."/>
            <person name="Monod M."/>
            <person name="Shelest E."/>
            <person name="Barton R.C."/>
            <person name="Birch E."/>
            <person name="Brakhage A.A."/>
            <person name="Chen Z."/>
            <person name="Gurr S.J."/>
            <person name="Heiman D."/>
            <person name="Heitman J."/>
            <person name="Kosti I."/>
            <person name="Rossi A."/>
            <person name="Saif S."/>
            <person name="Samalova M."/>
            <person name="Saunders C.W."/>
            <person name="Shea T."/>
            <person name="Summerbell R.C."/>
            <person name="Xu J."/>
            <person name="Young S."/>
            <person name="Zeng Q."/>
            <person name="Birren B.W."/>
            <person name="Cuomo C.A."/>
            <person name="White T.C."/>
        </authorList>
    </citation>
    <scope>NUCLEOTIDE SEQUENCE [LARGE SCALE GENOMIC DNA]</scope>
    <source>
        <strain>ATCC MYA-4605 / CBS 113480</strain>
    </source>
</reference>
<sequence length="298" mass="34328">MSAQSSSTANIFVVLRQLRSLCYSNRPVTTSLSYTASHRTQSTTSTNAIKTQWHSSASYSTAPPSKPEKRPVEDIDLSQPMKSKPKKPQPAWAVQKNALKAKFKEGWKPRKKVSPDTMESIRKLHSMDSVKYSTKNLAEEFKISPEAIRRILKSKWRATEAEEIDRRDRWEKRKIRIQEQMMELGLRHSDPVSEARPGLQEELSRGTSVWNATEKTAGGYLPQKSNREFFPKKRFGAEERSAQDGDPWDVSGRDDLIDTKRDSFGDNWPQNSHMRRGAQSRTQTEDYHRQGYRGKPNW</sequence>
<dbReference type="EMBL" id="DS995704">
    <property type="protein sequence ID" value="EEQ31583.1"/>
    <property type="molecule type" value="Genomic_DNA"/>
</dbReference>
<dbReference type="RefSeq" id="XP_002846665.1">
    <property type="nucleotide sequence ID" value="XM_002846619.1"/>
</dbReference>
<dbReference type="SMR" id="C5FNG9"/>
<dbReference type="STRING" id="554155.C5FNG9"/>
<dbReference type="GeneID" id="9229776"/>
<dbReference type="VEuPathDB" id="FungiDB:MCYG_04402"/>
<dbReference type="eggNOG" id="ENOG502S7IA">
    <property type="taxonomic scope" value="Eukaryota"/>
</dbReference>
<dbReference type="HOGENOM" id="CLU_933757_0_0_1"/>
<dbReference type="OMA" id="SKWRATE"/>
<dbReference type="OrthoDB" id="5578174at2759"/>
<dbReference type="Proteomes" id="UP000002035">
    <property type="component" value="Unassembled WGS sequence"/>
</dbReference>
<dbReference type="GO" id="GO:0005739">
    <property type="term" value="C:mitochondrion"/>
    <property type="evidence" value="ECO:0007669"/>
    <property type="project" value="UniProtKB-SubCell"/>
</dbReference>
<dbReference type="GO" id="GO:0005634">
    <property type="term" value="C:nucleus"/>
    <property type="evidence" value="ECO:0007669"/>
    <property type="project" value="TreeGrafter"/>
</dbReference>
<dbReference type="InterPro" id="IPR010487">
    <property type="entry name" value="NGRN/Rrg9"/>
</dbReference>
<dbReference type="PANTHER" id="PTHR13475">
    <property type="entry name" value="NEUGRIN"/>
    <property type="match status" value="1"/>
</dbReference>
<dbReference type="PANTHER" id="PTHR13475:SF3">
    <property type="entry name" value="NEUGRIN"/>
    <property type="match status" value="1"/>
</dbReference>
<dbReference type="Pfam" id="PF06413">
    <property type="entry name" value="Neugrin"/>
    <property type="match status" value="1"/>
</dbReference>
<gene>
    <name type="primary">RRG9</name>
    <name type="ORF">MCYG_04402</name>
</gene>
<accession>C5FNG9</accession>
<protein>
    <recommendedName>
        <fullName>Required for respiratory growth protein 9, mitochondrial</fullName>
    </recommendedName>
</protein>
<keyword id="KW-0496">Mitochondrion</keyword>
<keyword id="KW-1185">Reference proteome</keyword>
<keyword id="KW-0809">Transit peptide</keyword>
<name>RRG9_ARTOC</name>
<comment type="function">
    <text evidence="1">Required for respiratory activity and maintenance and expression of the mitochondrial genome.</text>
</comment>
<comment type="subcellular location">
    <subcellularLocation>
        <location evidence="1">Mitochondrion</location>
    </subcellularLocation>
</comment>
<comment type="similarity">
    <text evidence="4">Belongs to the RRG9 family.</text>
</comment>
<organism>
    <name type="scientific">Arthroderma otae (strain ATCC MYA-4605 / CBS 113480)</name>
    <name type="common">Microsporum canis</name>
    <dbReference type="NCBI Taxonomy" id="554155"/>
    <lineage>
        <taxon>Eukaryota</taxon>
        <taxon>Fungi</taxon>
        <taxon>Dikarya</taxon>
        <taxon>Ascomycota</taxon>
        <taxon>Pezizomycotina</taxon>
        <taxon>Eurotiomycetes</taxon>
        <taxon>Eurotiomycetidae</taxon>
        <taxon>Onygenales</taxon>
        <taxon>Arthrodermataceae</taxon>
        <taxon>Microsporum</taxon>
    </lineage>
</organism>
<proteinExistence type="inferred from homology"/>